<proteinExistence type="inferred from homology"/>
<gene>
    <name type="primary">pyrD</name>
    <name type="ordered locus">BAA_4046</name>
</gene>
<protein>
    <recommendedName>
        <fullName>Dihydroorotate dehydrogenase B (NAD(+)), catalytic subunit</fullName>
        <shortName>DHOD B</shortName>
        <shortName>DHODase B</shortName>
        <shortName>DHOdehase B</shortName>
        <ecNumber>1.3.1.14</ecNumber>
    </recommendedName>
    <alternativeName>
        <fullName>Dihydroorotate oxidase B</fullName>
    </alternativeName>
    <alternativeName>
        <fullName>Orotate reductase (NADH)</fullName>
    </alternativeName>
</protein>
<dbReference type="EC" id="1.3.1.14"/>
<dbReference type="EMBL" id="CP001598">
    <property type="protein sequence ID" value="ACQ46674.1"/>
    <property type="molecule type" value="Genomic_DNA"/>
</dbReference>
<dbReference type="RefSeq" id="WP_001081057.1">
    <property type="nucleotide sequence ID" value="NC_012659.1"/>
</dbReference>
<dbReference type="SMR" id="C3P654"/>
<dbReference type="GeneID" id="83637592"/>
<dbReference type="KEGG" id="bai:BAA_4046"/>
<dbReference type="HOGENOM" id="CLU_042042_0_0_9"/>
<dbReference type="UniPathway" id="UPA00070">
    <property type="reaction ID" value="UER00945"/>
</dbReference>
<dbReference type="GO" id="GO:0005737">
    <property type="term" value="C:cytoplasm"/>
    <property type="evidence" value="ECO:0007669"/>
    <property type="project" value="UniProtKB-SubCell"/>
</dbReference>
<dbReference type="GO" id="GO:0004589">
    <property type="term" value="F:dihydroorotate dehydrogenase (NAD+) activity"/>
    <property type="evidence" value="ECO:0007669"/>
    <property type="project" value="UniProtKB-EC"/>
</dbReference>
<dbReference type="GO" id="GO:0006207">
    <property type="term" value="P:'de novo' pyrimidine nucleobase biosynthetic process"/>
    <property type="evidence" value="ECO:0007669"/>
    <property type="project" value="InterPro"/>
</dbReference>
<dbReference type="GO" id="GO:0044205">
    <property type="term" value="P:'de novo' UMP biosynthetic process"/>
    <property type="evidence" value="ECO:0007669"/>
    <property type="project" value="UniProtKB-UniRule"/>
</dbReference>
<dbReference type="CDD" id="cd04740">
    <property type="entry name" value="DHOD_1B_like"/>
    <property type="match status" value="1"/>
</dbReference>
<dbReference type="FunFam" id="3.20.20.70:FF:000069">
    <property type="entry name" value="Dihydroorotate dehydrogenase"/>
    <property type="match status" value="1"/>
</dbReference>
<dbReference type="Gene3D" id="3.20.20.70">
    <property type="entry name" value="Aldolase class I"/>
    <property type="match status" value="1"/>
</dbReference>
<dbReference type="HAMAP" id="MF_00224">
    <property type="entry name" value="DHO_dh_type1"/>
    <property type="match status" value="1"/>
</dbReference>
<dbReference type="InterPro" id="IPR013785">
    <property type="entry name" value="Aldolase_TIM"/>
</dbReference>
<dbReference type="InterPro" id="IPR050074">
    <property type="entry name" value="DHO_dehydrogenase"/>
</dbReference>
<dbReference type="InterPro" id="IPR033888">
    <property type="entry name" value="DHOD_1B"/>
</dbReference>
<dbReference type="InterPro" id="IPR024920">
    <property type="entry name" value="Dihydroorotate_DH_1"/>
</dbReference>
<dbReference type="InterPro" id="IPR012135">
    <property type="entry name" value="Dihydroorotate_DH_1_2"/>
</dbReference>
<dbReference type="InterPro" id="IPR005720">
    <property type="entry name" value="Dihydroorotate_DH_cat"/>
</dbReference>
<dbReference type="InterPro" id="IPR001295">
    <property type="entry name" value="Dihydroorotate_DH_CS"/>
</dbReference>
<dbReference type="InterPro" id="IPR049622">
    <property type="entry name" value="Dihydroorotate_DH_I"/>
</dbReference>
<dbReference type="NCBIfam" id="NF005574">
    <property type="entry name" value="PRK07259.1"/>
    <property type="match status" value="1"/>
</dbReference>
<dbReference type="NCBIfam" id="TIGR01037">
    <property type="entry name" value="pyrD_sub1_fam"/>
    <property type="match status" value="1"/>
</dbReference>
<dbReference type="PANTHER" id="PTHR48109:SF1">
    <property type="entry name" value="DIHYDROOROTATE DEHYDROGENASE (FUMARATE)"/>
    <property type="match status" value="1"/>
</dbReference>
<dbReference type="PANTHER" id="PTHR48109">
    <property type="entry name" value="DIHYDROOROTATE DEHYDROGENASE (QUINONE), MITOCHONDRIAL-RELATED"/>
    <property type="match status" value="1"/>
</dbReference>
<dbReference type="Pfam" id="PF01180">
    <property type="entry name" value="DHO_dh"/>
    <property type="match status" value="1"/>
</dbReference>
<dbReference type="PIRSF" id="PIRSF000164">
    <property type="entry name" value="DHO_oxidase"/>
    <property type="match status" value="1"/>
</dbReference>
<dbReference type="SUPFAM" id="SSF51395">
    <property type="entry name" value="FMN-linked oxidoreductases"/>
    <property type="match status" value="1"/>
</dbReference>
<dbReference type="PROSITE" id="PS00911">
    <property type="entry name" value="DHODEHASE_1"/>
    <property type="match status" value="1"/>
</dbReference>
<dbReference type="PROSITE" id="PS00912">
    <property type="entry name" value="DHODEHASE_2"/>
    <property type="match status" value="1"/>
</dbReference>
<keyword id="KW-0963">Cytoplasm</keyword>
<keyword id="KW-0285">Flavoprotein</keyword>
<keyword id="KW-0288">FMN</keyword>
<keyword id="KW-0520">NAD</keyword>
<keyword id="KW-0560">Oxidoreductase</keyword>
<keyword id="KW-0665">Pyrimidine biosynthesis</keyword>
<sequence>MNRLQVELPGLSLKNPIIPASGCFGFGREYAQFYDLSVLGSIMIKATTEQPRYGNPTPRVAETPGGMLNAIGLQNPGLEKVMNSELPWLEQFDLPIIANVAGSQAEDYVAVAKEISKAPNVHALELNISCPNVKTGGIAFGTNPEIAADLTKRVKEVSEVPVYVKLSPNVANIVEIAKAIENAGADGLTMINTLLGMRLDLKTAKPILANRTGGLSGPAIKPVAIRMVHEVSQAVNIPIIGMGGIETAEDVIEFFYAGASAVAVGTANFIDPFVCPTIIEELPALLDELGFDHISECQGRSWKQTCHSR</sequence>
<feature type="chain" id="PRO_1000195039" description="Dihydroorotate dehydrogenase B (NAD(+)), catalytic subunit">
    <location>
        <begin position="1"/>
        <end position="309"/>
    </location>
</feature>
<feature type="active site" description="Nucleophile">
    <location>
        <position position="130"/>
    </location>
</feature>
<feature type="binding site" evidence="1">
    <location>
        <position position="21"/>
    </location>
    <ligand>
        <name>FMN</name>
        <dbReference type="ChEBI" id="CHEBI:58210"/>
    </ligand>
</feature>
<feature type="binding site" evidence="1">
    <location>
        <begin position="45"/>
        <end position="46"/>
    </location>
    <ligand>
        <name>FMN</name>
        <dbReference type="ChEBI" id="CHEBI:58210"/>
    </ligand>
</feature>
<feature type="binding site" evidence="1">
    <location>
        <position position="45"/>
    </location>
    <ligand>
        <name>substrate</name>
    </ligand>
</feature>
<feature type="binding site" evidence="1">
    <location>
        <begin position="69"/>
        <end position="73"/>
    </location>
    <ligand>
        <name>substrate</name>
    </ligand>
</feature>
<feature type="binding site" evidence="1">
    <location>
        <position position="99"/>
    </location>
    <ligand>
        <name>FMN</name>
        <dbReference type="ChEBI" id="CHEBI:58210"/>
    </ligand>
</feature>
<feature type="binding site" evidence="1">
    <location>
        <position position="127"/>
    </location>
    <ligand>
        <name>FMN</name>
        <dbReference type="ChEBI" id="CHEBI:58210"/>
    </ligand>
</feature>
<feature type="binding site" evidence="1">
    <location>
        <position position="127"/>
    </location>
    <ligand>
        <name>substrate</name>
    </ligand>
</feature>
<feature type="binding site" evidence="1">
    <location>
        <position position="165"/>
    </location>
    <ligand>
        <name>FMN</name>
        <dbReference type="ChEBI" id="CHEBI:58210"/>
    </ligand>
</feature>
<feature type="binding site" evidence="1">
    <location>
        <position position="191"/>
    </location>
    <ligand>
        <name>FMN</name>
        <dbReference type="ChEBI" id="CHEBI:58210"/>
    </ligand>
</feature>
<feature type="binding site" evidence="1">
    <location>
        <begin position="192"/>
        <end position="193"/>
    </location>
    <ligand>
        <name>substrate</name>
    </ligand>
</feature>
<feature type="binding site" evidence="1">
    <location>
        <position position="217"/>
    </location>
    <ligand>
        <name>FMN</name>
        <dbReference type="ChEBI" id="CHEBI:58210"/>
    </ligand>
</feature>
<feature type="binding site" evidence="1">
    <location>
        <begin position="243"/>
        <end position="244"/>
    </location>
    <ligand>
        <name>FMN</name>
        <dbReference type="ChEBI" id="CHEBI:58210"/>
    </ligand>
</feature>
<feature type="binding site" evidence="1">
    <location>
        <begin position="265"/>
        <end position="266"/>
    </location>
    <ligand>
        <name>FMN</name>
        <dbReference type="ChEBI" id="CHEBI:58210"/>
    </ligand>
</feature>
<reference key="1">
    <citation type="submission" date="2009-04" db="EMBL/GenBank/DDBJ databases">
        <title>Genome sequence of Bacillus anthracis A0248.</title>
        <authorList>
            <person name="Dodson R.J."/>
            <person name="Munk A.C."/>
            <person name="Bruce D."/>
            <person name="Detter C."/>
            <person name="Tapia R."/>
            <person name="Sutton G."/>
            <person name="Sims D."/>
            <person name="Brettin T."/>
        </authorList>
    </citation>
    <scope>NUCLEOTIDE SEQUENCE [LARGE SCALE GENOMIC DNA]</scope>
    <source>
        <strain>A0248</strain>
    </source>
</reference>
<name>PYRDB_BACAA</name>
<organism>
    <name type="scientific">Bacillus anthracis (strain A0248)</name>
    <dbReference type="NCBI Taxonomy" id="592021"/>
    <lineage>
        <taxon>Bacteria</taxon>
        <taxon>Bacillati</taxon>
        <taxon>Bacillota</taxon>
        <taxon>Bacilli</taxon>
        <taxon>Bacillales</taxon>
        <taxon>Bacillaceae</taxon>
        <taxon>Bacillus</taxon>
        <taxon>Bacillus cereus group</taxon>
    </lineage>
</organism>
<comment type="function">
    <text evidence="1">Catalyzes the conversion of dihydroorotate to orotate with NAD(+) as electron acceptor.</text>
</comment>
<comment type="catalytic activity">
    <reaction>
        <text>(S)-dihydroorotate + NAD(+) = orotate + NADH + H(+)</text>
        <dbReference type="Rhea" id="RHEA:13513"/>
        <dbReference type="ChEBI" id="CHEBI:15378"/>
        <dbReference type="ChEBI" id="CHEBI:30839"/>
        <dbReference type="ChEBI" id="CHEBI:30864"/>
        <dbReference type="ChEBI" id="CHEBI:57540"/>
        <dbReference type="ChEBI" id="CHEBI:57945"/>
        <dbReference type="EC" id="1.3.1.14"/>
    </reaction>
</comment>
<comment type="cofactor">
    <cofactor evidence="1">
        <name>FMN</name>
        <dbReference type="ChEBI" id="CHEBI:58210"/>
    </cofactor>
    <text evidence="1">Binds 1 FMN per subunit.</text>
</comment>
<comment type="pathway">
    <text>Pyrimidine metabolism; UMP biosynthesis via de novo pathway; orotate from (S)-dihydroorotate (NAD(+) route): step 1/1.</text>
</comment>
<comment type="subunit">
    <text evidence="1">Heterotetramer of 2 PyrK and 2 PyrD type B subunits.</text>
</comment>
<comment type="subcellular location">
    <subcellularLocation>
        <location evidence="1">Cytoplasm</location>
    </subcellularLocation>
</comment>
<comment type="similarity">
    <text evidence="2">Belongs to the dihydroorotate dehydrogenase family. Type 1 subfamily.</text>
</comment>
<accession>C3P654</accession>
<evidence type="ECO:0000250" key="1"/>
<evidence type="ECO:0000305" key="2"/>